<feature type="chain" id="PRO_0000371558" description="Putative CCR4-associated factor 1 homolog 8">
    <location>
        <begin position="1"/>
        <end position="239"/>
    </location>
</feature>
<feature type="binding site" evidence="1">
    <location>
        <position position="17"/>
    </location>
    <ligand>
        <name>a divalent metal cation</name>
        <dbReference type="ChEBI" id="CHEBI:60240"/>
        <note>catalytic</note>
    </ligand>
</feature>
<feature type="binding site" evidence="1">
    <location>
        <position position="19"/>
    </location>
    <ligand>
        <name>a divalent metal cation</name>
        <dbReference type="ChEBI" id="CHEBI:60240"/>
        <note>catalytic</note>
    </ligand>
</feature>
<feature type="binding site" evidence="1">
    <location>
        <position position="133"/>
    </location>
    <ligand>
        <name>a divalent metal cation</name>
        <dbReference type="ChEBI" id="CHEBI:60240"/>
        <note>catalytic</note>
    </ligand>
</feature>
<feature type="binding site" evidence="1">
    <location>
        <position position="204"/>
    </location>
    <ligand>
        <name>a divalent metal cation</name>
        <dbReference type="ChEBI" id="CHEBI:60240"/>
        <note>catalytic</note>
    </ligand>
</feature>
<gene>
    <name type="primary">CAF1-8</name>
    <name type="ordered locus">At3g44240</name>
    <name type="ORF">T10D17_30</name>
</gene>
<sequence>MSLIEDCLRSYRFIAIDTEFPSTLRETTQHATDEERYMDMSFSVDRAKLIQLGLTLFDINGRIGGTWEINFSDFGVDDARNEKSIEFLRRNGLDLRKIREEGIRIEGFFSEMFWMLKKTRRNITWVTFHGSYDIAYLLKGFTGEALPVTSERFSKAVARVLGSVYDLKVMAGRCEGLSSRLGLETLAHEFGLNRVGTAHHAGSNNELTAMVFAKVLSPFPLFLRFGSLELRTIESEAIV</sequence>
<proteinExistence type="inferred from homology"/>
<comment type="function">
    <text evidence="1">Ubiquitous transcription factor required for a diverse set of processes. It is a component of the CCR4 complex involved in the control of gene expression (By similarity).</text>
</comment>
<comment type="catalytic activity">
    <reaction>
        <text>Exonucleolytic cleavage of poly(A) to 5'-AMP.</text>
        <dbReference type="EC" id="3.1.13.4"/>
    </reaction>
</comment>
<comment type="cofactor">
    <cofactor evidence="1">
        <name>a divalent metal cation</name>
        <dbReference type="ChEBI" id="CHEBI:60240"/>
    </cofactor>
</comment>
<comment type="subunit">
    <text evidence="1">Component of the CCR4-NOT complex, at least composed of CRR4 and CAF1 proteins.</text>
</comment>
<comment type="subcellular location">
    <subcellularLocation>
        <location evidence="1">Nucleus</location>
    </subcellularLocation>
    <subcellularLocation>
        <location evidence="1">Cytoplasm</location>
    </subcellularLocation>
</comment>
<comment type="similarity">
    <text evidence="2">Belongs to the CAF1 family.</text>
</comment>
<protein>
    <recommendedName>
        <fullName>Putative CCR4-associated factor 1 homolog 8</fullName>
        <ecNumber>3.1.13.4</ecNumber>
    </recommendedName>
</protein>
<accession>Q9LXM4</accession>
<dbReference type="EC" id="3.1.13.4"/>
<dbReference type="EMBL" id="AL353865">
    <property type="protein sequence ID" value="CAB88992.1"/>
    <property type="molecule type" value="Genomic_DNA"/>
</dbReference>
<dbReference type="EMBL" id="CP002686">
    <property type="protein sequence ID" value="AEE77880.1"/>
    <property type="molecule type" value="Genomic_DNA"/>
</dbReference>
<dbReference type="PIR" id="T49140">
    <property type="entry name" value="T49140"/>
</dbReference>
<dbReference type="RefSeq" id="NP_190010.1">
    <property type="nucleotide sequence ID" value="NM_114292.1"/>
</dbReference>
<dbReference type="SMR" id="Q9LXM4"/>
<dbReference type="FunCoup" id="Q9LXM4">
    <property type="interactions" value="112"/>
</dbReference>
<dbReference type="STRING" id="3702.Q9LXM4"/>
<dbReference type="PaxDb" id="3702-AT3G44240.1"/>
<dbReference type="ProteomicsDB" id="223865"/>
<dbReference type="DNASU" id="823549"/>
<dbReference type="EnsemblPlants" id="AT3G44240.1">
    <property type="protein sequence ID" value="AT3G44240.1"/>
    <property type="gene ID" value="AT3G44240"/>
</dbReference>
<dbReference type="GeneID" id="823549"/>
<dbReference type="Gramene" id="AT3G44240.1">
    <property type="protein sequence ID" value="AT3G44240.1"/>
    <property type="gene ID" value="AT3G44240"/>
</dbReference>
<dbReference type="KEGG" id="ath:AT3G44240"/>
<dbReference type="Araport" id="AT3G44240"/>
<dbReference type="TAIR" id="AT3G44240">
    <property type="gene designation" value="CAF1F"/>
</dbReference>
<dbReference type="eggNOG" id="KOG0304">
    <property type="taxonomic scope" value="Eukaryota"/>
</dbReference>
<dbReference type="HOGENOM" id="CLU_027974_1_3_1"/>
<dbReference type="InParanoid" id="Q9LXM4"/>
<dbReference type="OMA" id="FYHTSPM"/>
<dbReference type="PhylomeDB" id="Q9LXM4"/>
<dbReference type="PRO" id="PR:Q9LXM4"/>
<dbReference type="Proteomes" id="UP000006548">
    <property type="component" value="Chromosome 3"/>
</dbReference>
<dbReference type="ExpressionAtlas" id="Q9LXM4">
    <property type="expression patterns" value="baseline and differential"/>
</dbReference>
<dbReference type="GO" id="GO:0030014">
    <property type="term" value="C:CCR4-NOT complex"/>
    <property type="evidence" value="ECO:0007669"/>
    <property type="project" value="InterPro"/>
</dbReference>
<dbReference type="GO" id="GO:0005737">
    <property type="term" value="C:cytoplasm"/>
    <property type="evidence" value="ECO:0007669"/>
    <property type="project" value="UniProtKB-SubCell"/>
</dbReference>
<dbReference type="GO" id="GO:0005634">
    <property type="term" value="C:nucleus"/>
    <property type="evidence" value="ECO:0007669"/>
    <property type="project" value="UniProtKB-SubCell"/>
</dbReference>
<dbReference type="GO" id="GO:0046872">
    <property type="term" value="F:metal ion binding"/>
    <property type="evidence" value="ECO:0007669"/>
    <property type="project" value="UniProtKB-KW"/>
</dbReference>
<dbReference type="GO" id="GO:0004535">
    <property type="term" value="F:poly(A)-specific ribonuclease activity"/>
    <property type="evidence" value="ECO:0007669"/>
    <property type="project" value="UniProtKB-EC"/>
</dbReference>
<dbReference type="GO" id="GO:0003723">
    <property type="term" value="F:RNA binding"/>
    <property type="evidence" value="ECO:0007669"/>
    <property type="project" value="UniProtKB-KW"/>
</dbReference>
<dbReference type="FunFam" id="3.30.420.10:FF:000223">
    <property type="entry name" value="Probable CCR4-associated factor 1 homolog 5"/>
    <property type="match status" value="1"/>
</dbReference>
<dbReference type="Gene3D" id="3.30.420.10">
    <property type="entry name" value="Ribonuclease H-like superfamily/Ribonuclease H"/>
    <property type="match status" value="1"/>
</dbReference>
<dbReference type="InterPro" id="IPR039637">
    <property type="entry name" value="CNOT7/CNOT8/Pop2"/>
</dbReference>
<dbReference type="InterPro" id="IPR006941">
    <property type="entry name" value="RNase_CAF1"/>
</dbReference>
<dbReference type="InterPro" id="IPR012337">
    <property type="entry name" value="RNaseH-like_sf"/>
</dbReference>
<dbReference type="InterPro" id="IPR036397">
    <property type="entry name" value="RNaseH_sf"/>
</dbReference>
<dbReference type="PANTHER" id="PTHR10797">
    <property type="entry name" value="CCR4-NOT TRANSCRIPTION COMPLEX SUBUNIT"/>
    <property type="match status" value="1"/>
</dbReference>
<dbReference type="Pfam" id="PF04857">
    <property type="entry name" value="CAF1"/>
    <property type="match status" value="2"/>
</dbReference>
<dbReference type="SUPFAM" id="SSF53098">
    <property type="entry name" value="Ribonuclease H-like"/>
    <property type="match status" value="1"/>
</dbReference>
<name>CAF1H_ARATH</name>
<keyword id="KW-0963">Cytoplasm</keyword>
<keyword id="KW-0269">Exonuclease</keyword>
<keyword id="KW-0378">Hydrolase</keyword>
<keyword id="KW-0479">Metal-binding</keyword>
<keyword id="KW-0540">Nuclease</keyword>
<keyword id="KW-0539">Nucleus</keyword>
<keyword id="KW-1185">Reference proteome</keyword>
<keyword id="KW-0694">RNA-binding</keyword>
<keyword id="KW-0804">Transcription</keyword>
<keyword id="KW-0805">Transcription regulation</keyword>
<organism>
    <name type="scientific">Arabidopsis thaliana</name>
    <name type="common">Mouse-ear cress</name>
    <dbReference type="NCBI Taxonomy" id="3702"/>
    <lineage>
        <taxon>Eukaryota</taxon>
        <taxon>Viridiplantae</taxon>
        <taxon>Streptophyta</taxon>
        <taxon>Embryophyta</taxon>
        <taxon>Tracheophyta</taxon>
        <taxon>Spermatophyta</taxon>
        <taxon>Magnoliopsida</taxon>
        <taxon>eudicotyledons</taxon>
        <taxon>Gunneridae</taxon>
        <taxon>Pentapetalae</taxon>
        <taxon>rosids</taxon>
        <taxon>malvids</taxon>
        <taxon>Brassicales</taxon>
        <taxon>Brassicaceae</taxon>
        <taxon>Camelineae</taxon>
        <taxon>Arabidopsis</taxon>
    </lineage>
</organism>
<reference key="1">
    <citation type="journal article" date="2000" name="Nature">
        <title>Sequence and analysis of chromosome 3 of the plant Arabidopsis thaliana.</title>
        <authorList>
            <person name="Salanoubat M."/>
            <person name="Lemcke K."/>
            <person name="Rieger M."/>
            <person name="Ansorge W."/>
            <person name="Unseld M."/>
            <person name="Fartmann B."/>
            <person name="Valle G."/>
            <person name="Bloecker H."/>
            <person name="Perez-Alonso M."/>
            <person name="Obermaier B."/>
            <person name="Delseny M."/>
            <person name="Boutry M."/>
            <person name="Grivell L.A."/>
            <person name="Mache R."/>
            <person name="Puigdomenech P."/>
            <person name="De Simone V."/>
            <person name="Choisne N."/>
            <person name="Artiguenave F."/>
            <person name="Robert C."/>
            <person name="Brottier P."/>
            <person name="Wincker P."/>
            <person name="Cattolico L."/>
            <person name="Weissenbach J."/>
            <person name="Saurin W."/>
            <person name="Quetier F."/>
            <person name="Schaefer M."/>
            <person name="Mueller-Auer S."/>
            <person name="Gabel C."/>
            <person name="Fuchs M."/>
            <person name="Benes V."/>
            <person name="Wurmbach E."/>
            <person name="Drzonek H."/>
            <person name="Erfle H."/>
            <person name="Jordan N."/>
            <person name="Bangert S."/>
            <person name="Wiedelmann R."/>
            <person name="Kranz H."/>
            <person name="Voss H."/>
            <person name="Holland R."/>
            <person name="Brandt P."/>
            <person name="Nyakatura G."/>
            <person name="Vezzi A."/>
            <person name="D'Angelo M."/>
            <person name="Pallavicini A."/>
            <person name="Toppo S."/>
            <person name="Simionati B."/>
            <person name="Conrad A."/>
            <person name="Hornischer K."/>
            <person name="Kauer G."/>
            <person name="Loehnert T.-H."/>
            <person name="Nordsiek G."/>
            <person name="Reichelt J."/>
            <person name="Scharfe M."/>
            <person name="Schoen O."/>
            <person name="Bargues M."/>
            <person name="Terol J."/>
            <person name="Climent J."/>
            <person name="Navarro P."/>
            <person name="Collado C."/>
            <person name="Perez-Perez A."/>
            <person name="Ottenwaelder B."/>
            <person name="Duchemin D."/>
            <person name="Cooke R."/>
            <person name="Laudie M."/>
            <person name="Berger-Llauro C."/>
            <person name="Purnelle B."/>
            <person name="Masuy D."/>
            <person name="de Haan M."/>
            <person name="Maarse A.C."/>
            <person name="Alcaraz J.-P."/>
            <person name="Cottet A."/>
            <person name="Casacuberta E."/>
            <person name="Monfort A."/>
            <person name="Argiriou A."/>
            <person name="Flores M."/>
            <person name="Liguori R."/>
            <person name="Vitale D."/>
            <person name="Mannhaupt G."/>
            <person name="Haase D."/>
            <person name="Schoof H."/>
            <person name="Rudd S."/>
            <person name="Zaccaria P."/>
            <person name="Mewes H.-W."/>
            <person name="Mayer K.F.X."/>
            <person name="Kaul S."/>
            <person name="Town C.D."/>
            <person name="Koo H.L."/>
            <person name="Tallon L.J."/>
            <person name="Jenkins J."/>
            <person name="Rooney T."/>
            <person name="Rizzo M."/>
            <person name="Walts A."/>
            <person name="Utterback T."/>
            <person name="Fujii C.Y."/>
            <person name="Shea T.P."/>
            <person name="Creasy T.H."/>
            <person name="Haas B."/>
            <person name="Maiti R."/>
            <person name="Wu D."/>
            <person name="Peterson J."/>
            <person name="Van Aken S."/>
            <person name="Pai G."/>
            <person name="Militscher J."/>
            <person name="Sellers P."/>
            <person name="Gill J.E."/>
            <person name="Feldblyum T.V."/>
            <person name="Preuss D."/>
            <person name="Lin X."/>
            <person name="Nierman W.C."/>
            <person name="Salzberg S.L."/>
            <person name="White O."/>
            <person name="Venter J.C."/>
            <person name="Fraser C.M."/>
            <person name="Kaneko T."/>
            <person name="Nakamura Y."/>
            <person name="Sato S."/>
            <person name="Kato T."/>
            <person name="Asamizu E."/>
            <person name="Sasamoto S."/>
            <person name="Kimura T."/>
            <person name="Idesawa K."/>
            <person name="Kawashima K."/>
            <person name="Kishida Y."/>
            <person name="Kiyokawa C."/>
            <person name="Kohara M."/>
            <person name="Matsumoto M."/>
            <person name="Matsuno A."/>
            <person name="Muraki A."/>
            <person name="Nakayama S."/>
            <person name="Nakazaki N."/>
            <person name="Shinpo S."/>
            <person name="Takeuchi C."/>
            <person name="Wada T."/>
            <person name="Watanabe A."/>
            <person name="Yamada M."/>
            <person name="Yasuda M."/>
            <person name="Tabata S."/>
        </authorList>
    </citation>
    <scope>NUCLEOTIDE SEQUENCE [LARGE SCALE GENOMIC DNA]</scope>
    <source>
        <strain>cv. Columbia</strain>
    </source>
</reference>
<reference key="2">
    <citation type="journal article" date="2017" name="Plant J.">
        <title>Araport11: a complete reannotation of the Arabidopsis thaliana reference genome.</title>
        <authorList>
            <person name="Cheng C.Y."/>
            <person name="Krishnakumar V."/>
            <person name="Chan A.P."/>
            <person name="Thibaud-Nissen F."/>
            <person name="Schobel S."/>
            <person name="Town C.D."/>
        </authorList>
    </citation>
    <scope>GENOME REANNOTATION</scope>
    <source>
        <strain>cv. Columbia</strain>
    </source>
</reference>
<evidence type="ECO:0000250" key="1"/>
<evidence type="ECO:0000305" key="2"/>